<keyword id="KW-1003">Cell membrane</keyword>
<keyword id="KW-0325">Glycoprotein</keyword>
<keyword id="KW-0433">Leucine-rich repeat</keyword>
<keyword id="KW-0472">Membrane</keyword>
<keyword id="KW-0675">Receptor</keyword>
<keyword id="KW-1185">Reference proteome</keyword>
<keyword id="KW-0677">Repeat</keyword>
<keyword id="KW-0732">Signal</keyword>
<keyword id="KW-0812">Transmembrane</keyword>
<keyword id="KW-1133">Transmembrane helix</keyword>
<proteinExistence type="evidence at transcript level"/>
<sequence>MIRSLSYCFLTIYFFLSILPLPNTIACPTRLLCRSDQRDALLEVQKELHVPTTTWNKNVDCCSWDGVTCDAILGELVLSRCKLQGEIPSSIGNLSHLTYLDLSNNQLVGEVPASIGNLNQLESMRLWDNDLKGNIPTSFANLTKLSELYLFGNQFTGGDTVLANLTSLSIIDLSLNYFKSSISADLSGLHNLERFSVYNNSFSGPFPLSLLMIPSLVHIDLSQNHFEGPIDFRNTFSLSRLRVLYVGFNNLDGLIPESISKLVNLEYLDVSHNNFGGQVPRSISKVVNLTSVDLSYNKLEGQVPDFVWRSSKLDYVDLSYNSFNCFAKSVEVIDGASLTMLNLGSNSVDGPFPKWICKVKDLYALDLSNNHFNGSIPQCLKYSTYFHTLNLRNNSLSGVLPNLFIKDSQLRSLDVSSNNLVGKLPKSLINCERIEFLNVKGNKIMDTFPFWLGSLPYLKVLMLGSNAFYGPVYNPSAYLGFPSIRIIDISNNNFVGSLPQDYFANWLEMSLVWSGSDIPQFKYMGNVNFSTYDSIDLVYKGVETDFDRIFEGFNAIDFSGNRFSGHIPGSIGLLSELRLLNLSGNAFTGNIPPSLANITNLESLDLSRNNLSGEIPISLGKLSFLSNTNFSYNHLEGLIPQSTQFATQNCSSFLGNLGLYGFREICGESHHVPVPTTSQQPEEPLSESEDQLLNWIAAAIAFGPGMFCGLVIGHIFTS</sequence>
<evidence type="ECO:0000255" key="1"/>
<evidence type="ECO:0000255" key="2">
    <source>
        <dbReference type="PROSITE-ProRule" id="PRU00498"/>
    </source>
</evidence>
<evidence type="ECO:0000303" key="3">
    <source>
    </source>
</evidence>
<evidence type="ECO:0000305" key="4"/>
<evidence type="ECO:0000312" key="5">
    <source>
        <dbReference type="Araport" id="AT3G23010"/>
    </source>
</evidence>
<evidence type="ECO:0000312" key="6">
    <source>
        <dbReference type="EMBL" id="BAB02092.1"/>
    </source>
</evidence>
<comment type="subcellular location">
    <subcellularLocation>
        <location evidence="4">Cell membrane</location>
        <topology evidence="4">Single-pass type I membrane protein</topology>
    </subcellularLocation>
</comment>
<comment type="similarity">
    <text evidence="4">Belongs to the RLP family.</text>
</comment>
<comment type="sequence caution" evidence="4">
    <conflict type="erroneous gene model prediction">
        <sequence resource="EMBL-CDS" id="AEE76705"/>
    </conflict>
</comment>
<comment type="sequence caution" evidence="4">
    <conflict type="erroneous gene model prediction">
        <sequence resource="EMBL-CDS" id="BAB02092"/>
    </conflict>
</comment>
<dbReference type="EMBL" id="AB026655">
    <property type="protein sequence ID" value="BAB02092.1"/>
    <property type="status" value="ALT_SEQ"/>
    <property type="molecule type" value="Genomic_DNA"/>
</dbReference>
<dbReference type="EMBL" id="CP002686">
    <property type="protein sequence ID" value="AEE76705.1"/>
    <property type="status" value="ALT_SEQ"/>
    <property type="molecule type" value="Genomic_DNA"/>
</dbReference>
<dbReference type="EMBL" id="DQ446687">
    <property type="protein sequence ID" value="ABE65958.1"/>
    <property type="molecule type" value="mRNA"/>
</dbReference>
<dbReference type="RefSeq" id="NP_188941.1">
    <property type="nucleotide sequence ID" value="NM_113201.2"/>
</dbReference>
<dbReference type="SMR" id="Q1PEN0"/>
<dbReference type="STRING" id="3702.Q1PEN0"/>
<dbReference type="GlyCosmos" id="Q1PEN0">
    <property type="glycosylation" value="13 sites, No reported glycans"/>
</dbReference>
<dbReference type="GlyGen" id="Q1PEN0">
    <property type="glycosylation" value="13 sites"/>
</dbReference>
<dbReference type="PaxDb" id="3702-AT3G23010.1"/>
<dbReference type="GeneID" id="821875"/>
<dbReference type="KEGG" id="ath:AT3G23010"/>
<dbReference type="Araport" id="AT3G23010"/>
<dbReference type="TAIR" id="AT3G23010">
    <property type="gene designation" value="RLP36"/>
</dbReference>
<dbReference type="eggNOG" id="KOG0619">
    <property type="taxonomic scope" value="Eukaryota"/>
</dbReference>
<dbReference type="HOGENOM" id="CLU_000288_18_3_1"/>
<dbReference type="InParanoid" id="Q1PEN0"/>
<dbReference type="PhylomeDB" id="Q1PEN0"/>
<dbReference type="PRO" id="PR:Q1PEN0"/>
<dbReference type="Proteomes" id="UP000006548">
    <property type="component" value="Chromosome 3"/>
</dbReference>
<dbReference type="ExpressionAtlas" id="Q1PEN0">
    <property type="expression patterns" value="baseline and differential"/>
</dbReference>
<dbReference type="GO" id="GO:0005886">
    <property type="term" value="C:plasma membrane"/>
    <property type="evidence" value="ECO:0007669"/>
    <property type="project" value="UniProtKB-SubCell"/>
</dbReference>
<dbReference type="FunFam" id="3.80.10.10:FF:000041">
    <property type="entry name" value="LRR receptor-like serine/threonine-protein kinase ERECTA"/>
    <property type="match status" value="1"/>
</dbReference>
<dbReference type="FunFam" id="3.80.10.10:FF:000095">
    <property type="entry name" value="LRR receptor-like serine/threonine-protein kinase GSO1"/>
    <property type="match status" value="1"/>
</dbReference>
<dbReference type="FunFam" id="3.80.10.10:FF:000213">
    <property type="entry name" value="Tyrosine-sulfated glycopeptide receptor 1"/>
    <property type="match status" value="1"/>
</dbReference>
<dbReference type="Gene3D" id="3.80.10.10">
    <property type="entry name" value="Ribonuclease Inhibitor"/>
    <property type="match status" value="2"/>
</dbReference>
<dbReference type="InterPro" id="IPR001611">
    <property type="entry name" value="Leu-rich_rpt"/>
</dbReference>
<dbReference type="InterPro" id="IPR003591">
    <property type="entry name" value="Leu-rich_rpt_typical-subtyp"/>
</dbReference>
<dbReference type="InterPro" id="IPR032675">
    <property type="entry name" value="LRR_dom_sf"/>
</dbReference>
<dbReference type="InterPro" id="IPR013210">
    <property type="entry name" value="LRR_N_plant-typ"/>
</dbReference>
<dbReference type="InterPro" id="IPR055414">
    <property type="entry name" value="LRR_R13L4/SHOC2-like"/>
</dbReference>
<dbReference type="PANTHER" id="PTHR48052:SF8">
    <property type="entry name" value="LRR RECEPTOR-LIKE SERINE_THREONINE-PROTEIN KINASE FLS2"/>
    <property type="match status" value="1"/>
</dbReference>
<dbReference type="PANTHER" id="PTHR48052">
    <property type="entry name" value="UNNAMED PRODUCT"/>
    <property type="match status" value="1"/>
</dbReference>
<dbReference type="Pfam" id="PF00560">
    <property type="entry name" value="LRR_1"/>
    <property type="match status" value="6"/>
</dbReference>
<dbReference type="Pfam" id="PF23598">
    <property type="entry name" value="LRR_14"/>
    <property type="match status" value="1"/>
</dbReference>
<dbReference type="Pfam" id="PF13855">
    <property type="entry name" value="LRR_8"/>
    <property type="match status" value="1"/>
</dbReference>
<dbReference type="Pfam" id="PF08263">
    <property type="entry name" value="LRRNT_2"/>
    <property type="match status" value="1"/>
</dbReference>
<dbReference type="PRINTS" id="PR00019">
    <property type="entry name" value="LEURICHRPT"/>
</dbReference>
<dbReference type="SMART" id="SM00365">
    <property type="entry name" value="LRR_SD22"/>
    <property type="match status" value="5"/>
</dbReference>
<dbReference type="SMART" id="SM00369">
    <property type="entry name" value="LRR_TYP"/>
    <property type="match status" value="7"/>
</dbReference>
<dbReference type="SUPFAM" id="SSF52058">
    <property type="entry name" value="L domain-like"/>
    <property type="match status" value="2"/>
</dbReference>
<dbReference type="SUPFAM" id="SSF52047">
    <property type="entry name" value="RNI-like"/>
    <property type="match status" value="1"/>
</dbReference>
<dbReference type="PROSITE" id="PS51450">
    <property type="entry name" value="LRR"/>
    <property type="match status" value="12"/>
</dbReference>
<organism>
    <name type="scientific">Arabidopsis thaliana</name>
    <name type="common">Mouse-ear cress</name>
    <dbReference type="NCBI Taxonomy" id="3702"/>
    <lineage>
        <taxon>Eukaryota</taxon>
        <taxon>Viridiplantae</taxon>
        <taxon>Streptophyta</taxon>
        <taxon>Embryophyta</taxon>
        <taxon>Tracheophyta</taxon>
        <taxon>Spermatophyta</taxon>
        <taxon>Magnoliopsida</taxon>
        <taxon>eudicotyledons</taxon>
        <taxon>Gunneridae</taxon>
        <taxon>Pentapetalae</taxon>
        <taxon>rosids</taxon>
        <taxon>malvids</taxon>
        <taxon>Brassicales</taxon>
        <taxon>Brassicaceae</taxon>
        <taxon>Camelineae</taxon>
        <taxon>Arabidopsis</taxon>
    </lineage>
</organism>
<reference key="1">
    <citation type="journal article" date="2000" name="DNA Res.">
        <title>Structural analysis of Arabidopsis thaliana chromosome 3. I. Sequence features of the regions of 4,504,864 bp covered by sixty P1 and TAC clones.</title>
        <authorList>
            <person name="Sato S."/>
            <person name="Nakamura Y."/>
            <person name="Kaneko T."/>
            <person name="Katoh T."/>
            <person name="Asamizu E."/>
            <person name="Tabata S."/>
        </authorList>
    </citation>
    <scope>NUCLEOTIDE SEQUENCE [LARGE SCALE GENOMIC DNA]</scope>
    <source>
        <strain>cv. Columbia</strain>
    </source>
</reference>
<reference key="2">
    <citation type="journal article" date="2017" name="Plant J.">
        <title>Araport11: a complete reannotation of the Arabidopsis thaliana reference genome.</title>
        <authorList>
            <person name="Cheng C.Y."/>
            <person name="Krishnakumar V."/>
            <person name="Chan A.P."/>
            <person name="Thibaud-Nissen F."/>
            <person name="Schobel S."/>
            <person name="Town C.D."/>
        </authorList>
    </citation>
    <scope>GENOME REANNOTATION</scope>
    <source>
        <strain>cv. Columbia</strain>
    </source>
</reference>
<reference key="3">
    <citation type="journal article" date="2006" name="Plant Biotechnol. J.">
        <title>Simultaneous high-throughput recombinational cloning of open reading frames in closed and open configurations.</title>
        <authorList>
            <person name="Underwood B.A."/>
            <person name="Vanderhaeghen R."/>
            <person name="Whitford R."/>
            <person name="Town C.D."/>
            <person name="Hilson P."/>
        </authorList>
    </citation>
    <scope>NUCLEOTIDE SEQUENCE [LARGE SCALE MRNA] OF 124-718</scope>
    <source>
        <strain>cv. Columbia</strain>
    </source>
</reference>
<reference key="4">
    <citation type="journal article" date="2005" name="Plant Physiol.">
        <title>Phylogenomic analysis of the receptor-like proteins of rice and Arabidopsis.</title>
        <authorList>
            <person name="Fritz-Laylin L.K."/>
            <person name="Krishnamurthy N."/>
            <person name="Toer M."/>
            <person name="Sjoelander K.V."/>
            <person name="Jones J.D."/>
        </authorList>
    </citation>
    <scope>GENE FAMILY</scope>
</reference>
<reference key="5">
    <citation type="journal article" date="2008" name="Plant Physiol.">
        <title>A genome-wide functional investigation into the roles of receptor-like proteins in Arabidopsis.</title>
        <authorList>
            <person name="Wang G."/>
            <person name="Ellendorff U."/>
            <person name="Kemp B."/>
            <person name="Mansfield J.W."/>
            <person name="Forsyth A."/>
            <person name="Mitchell K."/>
            <person name="Bastas K."/>
            <person name="Liu C.-M."/>
            <person name="Woods-Toer A."/>
            <person name="Zipfel C."/>
            <person name="de Wit P.J.G.M."/>
            <person name="Jones J.D.G."/>
            <person name="Toer M."/>
            <person name="Thomma B.P.H.J."/>
        </authorList>
    </citation>
    <scope>GENE FAMILY</scope>
    <scope>NOMENCLATURE</scope>
    <source>
        <strain>cv. Columbia</strain>
    </source>
</reference>
<protein>
    <recommendedName>
        <fullName evidence="3">Receptor-like protein 36</fullName>
        <shortName evidence="3">AtRLP36</shortName>
    </recommendedName>
</protein>
<name>RLP36_ARATH</name>
<accession>Q1PEN0</accession>
<accession>Q9LS89</accession>
<feature type="signal peptide" evidence="1">
    <location>
        <begin position="1"/>
        <end position="26"/>
    </location>
</feature>
<feature type="chain" id="PRO_0000443962" description="Receptor-like protein 36">
    <location>
        <begin position="27"/>
        <end position="718"/>
    </location>
</feature>
<feature type="topological domain" description="Extracellular" evidence="1">
    <location>
        <begin position="27"/>
        <end position="695"/>
    </location>
</feature>
<feature type="transmembrane region" description="Helical" evidence="1">
    <location>
        <begin position="696"/>
        <end position="716"/>
    </location>
</feature>
<feature type="topological domain" description="Cytoplasmic" evidence="1">
    <location>
        <begin position="717"/>
        <end position="718"/>
    </location>
</feature>
<feature type="repeat" description="LRR 1" evidence="1">
    <location>
        <begin position="70"/>
        <end position="94"/>
    </location>
</feature>
<feature type="repeat" description="LRR 2" evidence="1">
    <location>
        <begin position="95"/>
        <end position="118"/>
    </location>
</feature>
<feature type="repeat" description="LRR 3" evidence="1">
    <location>
        <begin position="120"/>
        <end position="141"/>
    </location>
</feature>
<feature type="repeat" description="LRR 4" evidence="1">
    <location>
        <begin position="143"/>
        <end position="165"/>
    </location>
</feature>
<feature type="repeat" description="LRR 5" evidence="1">
    <location>
        <begin position="166"/>
        <end position="188"/>
    </location>
</feature>
<feature type="repeat" description="LRR 6" evidence="1">
    <location>
        <begin position="189"/>
        <end position="213"/>
    </location>
</feature>
<feature type="repeat" description="LRR 7" evidence="1">
    <location>
        <begin position="214"/>
        <end position="238"/>
    </location>
</feature>
<feature type="repeat" description="LRR 8" evidence="1">
    <location>
        <begin position="239"/>
        <end position="261"/>
    </location>
</feature>
<feature type="repeat" description="LRR 9" evidence="1">
    <location>
        <begin position="262"/>
        <end position="286"/>
    </location>
</feature>
<feature type="repeat" description="LRR 10" evidence="1">
    <location>
        <begin position="288"/>
        <end position="310"/>
    </location>
</feature>
<feature type="repeat" description="LRR 11" evidence="1">
    <location>
        <begin position="312"/>
        <end position="334"/>
    </location>
</feature>
<feature type="repeat" description="LRR 12" evidence="1">
    <location>
        <begin position="335"/>
        <end position="359"/>
    </location>
</feature>
<feature type="repeat" description="LRR 13" evidence="1">
    <location>
        <begin position="360"/>
        <end position="383"/>
    </location>
</feature>
<feature type="repeat" description="LRR 14" evidence="1">
    <location>
        <begin position="384"/>
        <end position="406"/>
    </location>
</feature>
<feature type="repeat" description="LRR 15" evidence="1">
    <location>
        <begin position="407"/>
        <end position="431"/>
    </location>
</feature>
<feature type="repeat" description="LRR 16" evidence="1">
    <location>
        <begin position="433"/>
        <end position="454"/>
    </location>
</feature>
<feature type="repeat" description="LRR 17" evidence="1">
    <location>
        <begin position="455"/>
        <end position="480"/>
    </location>
</feature>
<feature type="repeat" description="LRR 18" evidence="1">
    <location>
        <begin position="481"/>
        <end position="505"/>
    </location>
</feature>
<feature type="repeat" description="LRR 19" evidence="1">
    <location>
        <begin position="550"/>
        <end position="574"/>
    </location>
</feature>
<feature type="repeat" description="LRR 20" evidence="1">
    <location>
        <begin position="575"/>
        <end position="598"/>
    </location>
</feature>
<feature type="repeat" description="LRR 21" evidence="1">
    <location>
        <begin position="599"/>
        <end position="622"/>
    </location>
</feature>
<feature type="repeat" description="LRR 22" evidence="1">
    <location>
        <begin position="624"/>
        <end position="647"/>
    </location>
</feature>
<feature type="glycosylation site" description="N-linked (GlcNAc...) asparagine" evidence="2">
    <location>
        <position position="93"/>
    </location>
</feature>
<feature type="glycosylation site" description="N-linked (GlcNAc...) asparagine" evidence="2">
    <location>
        <position position="141"/>
    </location>
</feature>
<feature type="glycosylation site" description="N-linked (GlcNAc...) asparagine" evidence="2">
    <location>
        <position position="164"/>
    </location>
</feature>
<feature type="glycosylation site" description="N-linked (GlcNAc...) asparagine" evidence="2">
    <location>
        <position position="199"/>
    </location>
</feature>
<feature type="glycosylation site" description="N-linked (GlcNAc...) asparagine" evidence="2">
    <location>
        <position position="288"/>
    </location>
</feature>
<feature type="glycosylation site" description="N-linked (GlcNAc...) asparagine" evidence="2">
    <location>
        <position position="373"/>
    </location>
</feature>
<feature type="glycosylation site" description="N-linked (GlcNAc...) asparagine" evidence="2">
    <location>
        <position position="393"/>
    </location>
</feature>
<feature type="glycosylation site" description="N-linked (GlcNAc...) asparagine" evidence="2">
    <location>
        <position position="528"/>
    </location>
</feature>
<feature type="glycosylation site" description="N-linked (GlcNAc...) asparagine" evidence="2">
    <location>
        <position position="581"/>
    </location>
</feature>
<feature type="glycosylation site" description="N-linked (GlcNAc...) asparagine" evidence="2">
    <location>
        <position position="597"/>
    </location>
</feature>
<feature type="glycosylation site" description="N-linked (GlcNAc...) asparagine" evidence="2">
    <location>
        <position position="610"/>
    </location>
</feature>
<feature type="glycosylation site" description="N-linked (GlcNAc...) asparagine" evidence="2">
    <location>
        <position position="629"/>
    </location>
</feature>
<feature type="glycosylation site" description="N-linked (GlcNAc...) asparagine" evidence="2">
    <location>
        <position position="649"/>
    </location>
</feature>
<gene>
    <name evidence="3" type="primary">RLP36</name>
    <name evidence="5" type="ordered locus">At3g23010</name>
    <name evidence="6" type="ORF">MXC7.4</name>
</gene>